<feature type="chain" id="PRO_1000098568" description="Threonine--tRNA ligase">
    <location>
        <begin position="1"/>
        <end position="642"/>
    </location>
</feature>
<feature type="domain" description="TGS" evidence="2">
    <location>
        <begin position="1"/>
        <end position="61"/>
    </location>
</feature>
<feature type="region of interest" description="Catalytic" evidence="1">
    <location>
        <begin position="243"/>
        <end position="534"/>
    </location>
</feature>
<feature type="binding site" evidence="1">
    <location>
        <position position="334"/>
    </location>
    <ligand>
        <name>Zn(2+)</name>
        <dbReference type="ChEBI" id="CHEBI:29105"/>
    </ligand>
</feature>
<feature type="binding site" evidence="1">
    <location>
        <position position="385"/>
    </location>
    <ligand>
        <name>Zn(2+)</name>
        <dbReference type="ChEBI" id="CHEBI:29105"/>
    </ligand>
</feature>
<feature type="binding site" evidence="1">
    <location>
        <position position="511"/>
    </location>
    <ligand>
        <name>Zn(2+)</name>
        <dbReference type="ChEBI" id="CHEBI:29105"/>
    </ligand>
</feature>
<feature type="modified residue" description="N6-acetyllysine" evidence="1">
    <location>
        <position position="286"/>
    </location>
</feature>
<organism>
    <name type="scientific">Escherichia coli O157:H7 (strain EC4115 / EHEC)</name>
    <dbReference type="NCBI Taxonomy" id="444450"/>
    <lineage>
        <taxon>Bacteria</taxon>
        <taxon>Pseudomonadati</taxon>
        <taxon>Pseudomonadota</taxon>
        <taxon>Gammaproteobacteria</taxon>
        <taxon>Enterobacterales</taxon>
        <taxon>Enterobacteriaceae</taxon>
        <taxon>Escherichia</taxon>
    </lineage>
</organism>
<name>SYT_ECO5E</name>
<accession>B5YQ07</accession>
<dbReference type="EC" id="6.1.1.3" evidence="1"/>
<dbReference type="EMBL" id="CP001164">
    <property type="protein sequence ID" value="ACI39262.1"/>
    <property type="molecule type" value="Genomic_DNA"/>
</dbReference>
<dbReference type="RefSeq" id="WP_001144201.1">
    <property type="nucleotide sequence ID" value="NC_011353.1"/>
</dbReference>
<dbReference type="SMR" id="B5YQ07"/>
<dbReference type="KEGG" id="ecf:ECH74115_2437"/>
<dbReference type="HOGENOM" id="CLU_008554_0_1_6"/>
<dbReference type="GO" id="GO:0005829">
    <property type="term" value="C:cytosol"/>
    <property type="evidence" value="ECO:0007669"/>
    <property type="project" value="TreeGrafter"/>
</dbReference>
<dbReference type="GO" id="GO:0005524">
    <property type="term" value="F:ATP binding"/>
    <property type="evidence" value="ECO:0007669"/>
    <property type="project" value="UniProtKB-UniRule"/>
</dbReference>
<dbReference type="GO" id="GO:0046872">
    <property type="term" value="F:metal ion binding"/>
    <property type="evidence" value="ECO:0007669"/>
    <property type="project" value="UniProtKB-KW"/>
</dbReference>
<dbReference type="GO" id="GO:0004829">
    <property type="term" value="F:threonine-tRNA ligase activity"/>
    <property type="evidence" value="ECO:0007669"/>
    <property type="project" value="UniProtKB-UniRule"/>
</dbReference>
<dbReference type="GO" id="GO:0000049">
    <property type="term" value="F:tRNA binding"/>
    <property type="evidence" value="ECO:0007669"/>
    <property type="project" value="UniProtKB-KW"/>
</dbReference>
<dbReference type="GO" id="GO:0006435">
    <property type="term" value="P:threonyl-tRNA aminoacylation"/>
    <property type="evidence" value="ECO:0007669"/>
    <property type="project" value="UniProtKB-UniRule"/>
</dbReference>
<dbReference type="CDD" id="cd01667">
    <property type="entry name" value="TGS_ThrRS"/>
    <property type="match status" value="1"/>
</dbReference>
<dbReference type="CDD" id="cd00860">
    <property type="entry name" value="ThrRS_anticodon"/>
    <property type="match status" value="1"/>
</dbReference>
<dbReference type="CDD" id="cd00771">
    <property type="entry name" value="ThrRS_core"/>
    <property type="match status" value="1"/>
</dbReference>
<dbReference type="FunFam" id="3.10.20.30:FF:000005">
    <property type="entry name" value="Threonine--tRNA ligase"/>
    <property type="match status" value="1"/>
</dbReference>
<dbReference type="FunFam" id="3.30.54.20:FF:000002">
    <property type="entry name" value="Threonine--tRNA ligase"/>
    <property type="match status" value="1"/>
</dbReference>
<dbReference type="FunFam" id="3.30.930.10:FF:000002">
    <property type="entry name" value="Threonine--tRNA ligase"/>
    <property type="match status" value="1"/>
</dbReference>
<dbReference type="FunFam" id="3.40.50.800:FF:000001">
    <property type="entry name" value="Threonine--tRNA ligase"/>
    <property type="match status" value="1"/>
</dbReference>
<dbReference type="FunFam" id="3.30.980.10:FF:000005">
    <property type="entry name" value="Threonyl-tRNA synthetase, mitochondrial"/>
    <property type="match status" value="1"/>
</dbReference>
<dbReference type="Gene3D" id="3.10.20.30">
    <property type="match status" value="1"/>
</dbReference>
<dbReference type="Gene3D" id="3.30.54.20">
    <property type="match status" value="1"/>
</dbReference>
<dbReference type="Gene3D" id="3.40.50.800">
    <property type="entry name" value="Anticodon-binding domain"/>
    <property type="match status" value="1"/>
</dbReference>
<dbReference type="Gene3D" id="3.30.930.10">
    <property type="entry name" value="Bira Bifunctional Protein, Domain 2"/>
    <property type="match status" value="1"/>
</dbReference>
<dbReference type="Gene3D" id="3.30.980.10">
    <property type="entry name" value="Threonyl-trna Synthetase, Chain A, domain 2"/>
    <property type="match status" value="1"/>
</dbReference>
<dbReference type="HAMAP" id="MF_00184">
    <property type="entry name" value="Thr_tRNA_synth"/>
    <property type="match status" value="1"/>
</dbReference>
<dbReference type="InterPro" id="IPR002314">
    <property type="entry name" value="aa-tRNA-synt_IIb"/>
</dbReference>
<dbReference type="InterPro" id="IPR006195">
    <property type="entry name" value="aa-tRNA-synth_II"/>
</dbReference>
<dbReference type="InterPro" id="IPR045864">
    <property type="entry name" value="aa-tRNA-synth_II/BPL/LPL"/>
</dbReference>
<dbReference type="InterPro" id="IPR004154">
    <property type="entry name" value="Anticodon-bd"/>
</dbReference>
<dbReference type="InterPro" id="IPR036621">
    <property type="entry name" value="Anticodon-bd_dom_sf"/>
</dbReference>
<dbReference type="InterPro" id="IPR012675">
    <property type="entry name" value="Beta-grasp_dom_sf"/>
</dbReference>
<dbReference type="InterPro" id="IPR004095">
    <property type="entry name" value="TGS"/>
</dbReference>
<dbReference type="InterPro" id="IPR012676">
    <property type="entry name" value="TGS-like"/>
</dbReference>
<dbReference type="InterPro" id="IPR002320">
    <property type="entry name" value="Thr-tRNA-ligase_IIa"/>
</dbReference>
<dbReference type="InterPro" id="IPR018163">
    <property type="entry name" value="Thr/Ala-tRNA-synth_IIc_edit"/>
</dbReference>
<dbReference type="InterPro" id="IPR047246">
    <property type="entry name" value="ThrRS_anticodon"/>
</dbReference>
<dbReference type="InterPro" id="IPR033728">
    <property type="entry name" value="ThrRS_core"/>
</dbReference>
<dbReference type="InterPro" id="IPR012947">
    <property type="entry name" value="tRNA_SAD"/>
</dbReference>
<dbReference type="NCBIfam" id="TIGR00418">
    <property type="entry name" value="thrS"/>
    <property type="match status" value="1"/>
</dbReference>
<dbReference type="PANTHER" id="PTHR11451:SF44">
    <property type="entry name" value="THREONINE--TRNA LIGASE, CHLOROPLASTIC_MITOCHONDRIAL 2"/>
    <property type="match status" value="1"/>
</dbReference>
<dbReference type="PANTHER" id="PTHR11451">
    <property type="entry name" value="THREONINE-TRNA LIGASE"/>
    <property type="match status" value="1"/>
</dbReference>
<dbReference type="Pfam" id="PF03129">
    <property type="entry name" value="HGTP_anticodon"/>
    <property type="match status" value="1"/>
</dbReference>
<dbReference type="Pfam" id="PF02824">
    <property type="entry name" value="TGS"/>
    <property type="match status" value="1"/>
</dbReference>
<dbReference type="Pfam" id="PF00587">
    <property type="entry name" value="tRNA-synt_2b"/>
    <property type="match status" value="1"/>
</dbReference>
<dbReference type="Pfam" id="PF07973">
    <property type="entry name" value="tRNA_SAD"/>
    <property type="match status" value="1"/>
</dbReference>
<dbReference type="PRINTS" id="PR01047">
    <property type="entry name" value="TRNASYNTHTHR"/>
</dbReference>
<dbReference type="SMART" id="SM00863">
    <property type="entry name" value="tRNA_SAD"/>
    <property type="match status" value="1"/>
</dbReference>
<dbReference type="SUPFAM" id="SSF52954">
    <property type="entry name" value="Class II aaRS ABD-related"/>
    <property type="match status" value="1"/>
</dbReference>
<dbReference type="SUPFAM" id="SSF55681">
    <property type="entry name" value="Class II aaRS and biotin synthetases"/>
    <property type="match status" value="1"/>
</dbReference>
<dbReference type="SUPFAM" id="SSF81271">
    <property type="entry name" value="TGS-like"/>
    <property type="match status" value="1"/>
</dbReference>
<dbReference type="SUPFAM" id="SSF55186">
    <property type="entry name" value="ThrRS/AlaRS common domain"/>
    <property type="match status" value="1"/>
</dbReference>
<dbReference type="PROSITE" id="PS50862">
    <property type="entry name" value="AA_TRNA_LIGASE_II"/>
    <property type="match status" value="1"/>
</dbReference>
<dbReference type="PROSITE" id="PS51880">
    <property type="entry name" value="TGS"/>
    <property type="match status" value="1"/>
</dbReference>
<proteinExistence type="inferred from homology"/>
<gene>
    <name evidence="1" type="primary">thrS</name>
    <name type="ordered locus">ECH74115_2437</name>
</gene>
<protein>
    <recommendedName>
        <fullName evidence="1">Threonine--tRNA ligase</fullName>
        <ecNumber evidence="1">6.1.1.3</ecNumber>
    </recommendedName>
    <alternativeName>
        <fullName evidence="1">Threonyl-tRNA synthetase</fullName>
        <shortName evidence="1">ThrRS</shortName>
    </alternativeName>
</protein>
<keyword id="KW-0007">Acetylation</keyword>
<keyword id="KW-0030">Aminoacyl-tRNA synthetase</keyword>
<keyword id="KW-0067">ATP-binding</keyword>
<keyword id="KW-0963">Cytoplasm</keyword>
<keyword id="KW-0436">Ligase</keyword>
<keyword id="KW-0479">Metal-binding</keyword>
<keyword id="KW-0547">Nucleotide-binding</keyword>
<keyword id="KW-0648">Protein biosynthesis</keyword>
<keyword id="KW-0694">RNA-binding</keyword>
<keyword id="KW-0820">tRNA-binding</keyword>
<keyword id="KW-0862">Zinc</keyword>
<sequence length="642" mass="74028">MPVITLPDGSQRHYDHAVSPMDVALDIGPGLAKACIAGRVNGELVDACDLIENDAQLSIITAKDEEGLEIIRHSCAHLLGHAIKQLWPHTKMAIGPVIDNGFYYDVDLDRTLTQEDVEALEKRMHELAEKNYDVIKKKVSWHEARETFANRGESYKVSILDENIAHDDKPGLYFHEEYVDMCRGPHVPNMRFCHHFKLMKTAGAYWRGDSNNKMLQRIYGTAWADKKALNAYLQRLEEAAKRDHRKIGKQLDLYHMQEEAPGMVFWHNDGWTIFRELEVFVRSKLKEYQYQEVKGPFMMDRVLWEKTGHWDNYKDAMFTTSSENREYCIKPMNCPGHVQIFNQGLKSYRDLPLRMAEFGSCHRNEPSGSLHGLMRVRGFTQDDAHIFCTEEQIRDEVNGCIRLVYDMYSTFGFEKIVVKLSTRPEKRIGSDEMWDRAEADLAVALEENNIPFEYQLGEGAFYGPKIEFTLYDCLDRAWQCGTVQLDFSLPSRLSASYVGEDNERKVPVMIHRAILGSMERFIGILTEEFAGFFPTWLAPVQVVIMNITDSQSEYVNELTQKLSNAGIRVKADLRNEKIGFKIREHTLRRVPYMLVCGDKEVESGKIAVRTRRGKDLGSMDVNEVIEKLQQEIRSRSLKQLEE</sequence>
<comment type="function">
    <text evidence="1">Catalyzes the attachment of threonine to tRNA(Thr) in a two-step reaction: L-threonine is first activated by ATP to form Thr-AMP and then transferred to the acceptor end of tRNA(Thr). Also edits incorrectly charged L-seryl-tRNA(Thr).</text>
</comment>
<comment type="catalytic activity">
    <reaction evidence="1">
        <text>tRNA(Thr) + L-threonine + ATP = L-threonyl-tRNA(Thr) + AMP + diphosphate + H(+)</text>
        <dbReference type="Rhea" id="RHEA:24624"/>
        <dbReference type="Rhea" id="RHEA-COMP:9670"/>
        <dbReference type="Rhea" id="RHEA-COMP:9704"/>
        <dbReference type="ChEBI" id="CHEBI:15378"/>
        <dbReference type="ChEBI" id="CHEBI:30616"/>
        <dbReference type="ChEBI" id="CHEBI:33019"/>
        <dbReference type="ChEBI" id="CHEBI:57926"/>
        <dbReference type="ChEBI" id="CHEBI:78442"/>
        <dbReference type="ChEBI" id="CHEBI:78534"/>
        <dbReference type="ChEBI" id="CHEBI:456215"/>
        <dbReference type="EC" id="6.1.1.3"/>
    </reaction>
</comment>
<comment type="cofactor">
    <cofactor evidence="1">
        <name>Zn(2+)</name>
        <dbReference type="ChEBI" id="CHEBI:29105"/>
    </cofactor>
    <text evidence="1">Binds 1 zinc ion per subunit.</text>
</comment>
<comment type="subunit">
    <text evidence="1">Homodimer.</text>
</comment>
<comment type="subcellular location">
    <subcellularLocation>
        <location evidence="1">Cytoplasm</location>
    </subcellularLocation>
</comment>
<comment type="similarity">
    <text evidence="1">Belongs to the class-II aminoacyl-tRNA synthetase family.</text>
</comment>
<evidence type="ECO:0000255" key="1">
    <source>
        <dbReference type="HAMAP-Rule" id="MF_00184"/>
    </source>
</evidence>
<evidence type="ECO:0000255" key="2">
    <source>
        <dbReference type="PROSITE-ProRule" id="PRU01228"/>
    </source>
</evidence>
<reference key="1">
    <citation type="journal article" date="2011" name="Proc. Natl. Acad. Sci. U.S.A.">
        <title>Genomic anatomy of Escherichia coli O157:H7 outbreaks.</title>
        <authorList>
            <person name="Eppinger M."/>
            <person name="Mammel M.K."/>
            <person name="Leclerc J.E."/>
            <person name="Ravel J."/>
            <person name="Cebula T.A."/>
        </authorList>
    </citation>
    <scope>NUCLEOTIDE SEQUENCE [LARGE SCALE GENOMIC DNA]</scope>
    <source>
        <strain>EC4115 / EHEC</strain>
    </source>
</reference>